<proteinExistence type="inferred from homology"/>
<organism>
    <name type="scientific">Leptospira borgpetersenii serovar Hardjo-bovis (strain JB197)</name>
    <dbReference type="NCBI Taxonomy" id="355277"/>
    <lineage>
        <taxon>Bacteria</taxon>
        <taxon>Pseudomonadati</taxon>
        <taxon>Spirochaetota</taxon>
        <taxon>Spirochaetia</taxon>
        <taxon>Leptospirales</taxon>
        <taxon>Leptospiraceae</taxon>
        <taxon>Leptospira</taxon>
    </lineage>
</organism>
<gene>
    <name evidence="1" type="primary">proA</name>
    <name type="ordered locus">LBJ_2490</name>
</gene>
<feature type="chain" id="PRO_1000049959" description="Gamma-glutamyl phosphate reductase">
    <location>
        <begin position="1"/>
        <end position="416"/>
    </location>
</feature>
<reference key="1">
    <citation type="journal article" date="2006" name="Proc. Natl. Acad. Sci. U.S.A.">
        <title>Genome reduction in Leptospira borgpetersenii reflects limited transmission potential.</title>
        <authorList>
            <person name="Bulach D.M."/>
            <person name="Zuerner R.L."/>
            <person name="Wilson P."/>
            <person name="Seemann T."/>
            <person name="McGrath A."/>
            <person name="Cullen P.A."/>
            <person name="Davis J."/>
            <person name="Johnson M."/>
            <person name="Kuczek E."/>
            <person name="Alt D.P."/>
            <person name="Peterson-Burch B."/>
            <person name="Coppel R.L."/>
            <person name="Rood J.I."/>
            <person name="Davies J.K."/>
            <person name="Adler B."/>
        </authorList>
    </citation>
    <scope>NUCLEOTIDE SEQUENCE [LARGE SCALE GENOMIC DNA]</scope>
    <source>
        <strain>JB197</strain>
    </source>
</reference>
<keyword id="KW-0028">Amino-acid biosynthesis</keyword>
<keyword id="KW-0963">Cytoplasm</keyword>
<keyword id="KW-0521">NADP</keyword>
<keyword id="KW-0560">Oxidoreductase</keyword>
<keyword id="KW-0641">Proline biosynthesis</keyword>
<sequence length="416" mass="45909">MKEIEYVKELSYRAKKASRTLKSLSSFQKNKVLLELANLLEKRKSEILSANEFDLKNGKEKNLPSALMDRLLLNEKRIDSMAFAVREIVSLPDPVGEVTRGLTLPNGLELVTKRVPLGVVMVIYESRPNVTIDVGALSFKSGNACILRGGSEAFHSNEILVKLFHEILNKEGIDTSAITFVDKTDRSFMLPFLQQTPSIDVVVPRGGEGLIKFISEHSMIPVVKHDKGVCNLYIDQDADPAKVIPIVINSKVQRPGVCNATENLILHNGYPFRKELLEALAKEGVELLLDPSALSLYPKGRPVKEEDYQEEFLDLRLSVKTVSSLEEALTFIERTSSGHTEAIITEDLNAAKMFTNSLDSAALFVNCSTRFHDGAEFGLGAEVGISTGKLHVRGPMGLVHLTTTTTYVTGNGQIRN</sequence>
<name>PROA_LEPBJ</name>
<comment type="function">
    <text evidence="1">Catalyzes the NADPH-dependent reduction of L-glutamate 5-phosphate into L-glutamate 5-semialdehyde and phosphate. The product spontaneously undergoes cyclization to form 1-pyrroline-5-carboxylate.</text>
</comment>
<comment type="catalytic activity">
    <reaction evidence="1">
        <text>L-glutamate 5-semialdehyde + phosphate + NADP(+) = L-glutamyl 5-phosphate + NADPH + H(+)</text>
        <dbReference type="Rhea" id="RHEA:19541"/>
        <dbReference type="ChEBI" id="CHEBI:15378"/>
        <dbReference type="ChEBI" id="CHEBI:43474"/>
        <dbReference type="ChEBI" id="CHEBI:57783"/>
        <dbReference type="ChEBI" id="CHEBI:58066"/>
        <dbReference type="ChEBI" id="CHEBI:58274"/>
        <dbReference type="ChEBI" id="CHEBI:58349"/>
        <dbReference type="EC" id="1.2.1.41"/>
    </reaction>
</comment>
<comment type="pathway">
    <text evidence="1">Amino-acid biosynthesis; L-proline biosynthesis; L-glutamate 5-semialdehyde from L-glutamate: step 2/2.</text>
</comment>
<comment type="subcellular location">
    <subcellularLocation>
        <location evidence="1">Cytoplasm</location>
    </subcellularLocation>
</comment>
<comment type="similarity">
    <text evidence="1">Belongs to the gamma-glutamyl phosphate reductase family.</text>
</comment>
<dbReference type="EC" id="1.2.1.41" evidence="1"/>
<dbReference type="EMBL" id="CP000350">
    <property type="protein sequence ID" value="ABJ76928.1"/>
    <property type="molecule type" value="Genomic_DNA"/>
</dbReference>
<dbReference type="RefSeq" id="WP_011669542.1">
    <property type="nucleotide sequence ID" value="NC_008510.1"/>
</dbReference>
<dbReference type="SMR" id="Q04Q92"/>
<dbReference type="KEGG" id="lbj:LBJ_2490"/>
<dbReference type="HOGENOM" id="CLU_030231_0_0_12"/>
<dbReference type="UniPathway" id="UPA00098">
    <property type="reaction ID" value="UER00360"/>
</dbReference>
<dbReference type="Proteomes" id="UP000000656">
    <property type="component" value="Chromosome 1"/>
</dbReference>
<dbReference type="GO" id="GO:0005737">
    <property type="term" value="C:cytoplasm"/>
    <property type="evidence" value="ECO:0007669"/>
    <property type="project" value="UniProtKB-SubCell"/>
</dbReference>
<dbReference type="GO" id="GO:0004350">
    <property type="term" value="F:glutamate-5-semialdehyde dehydrogenase activity"/>
    <property type="evidence" value="ECO:0007669"/>
    <property type="project" value="UniProtKB-UniRule"/>
</dbReference>
<dbReference type="GO" id="GO:0050661">
    <property type="term" value="F:NADP binding"/>
    <property type="evidence" value="ECO:0007669"/>
    <property type="project" value="InterPro"/>
</dbReference>
<dbReference type="GO" id="GO:0055129">
    <property type="term" value="P:L-proline biosynthetic process"/>
    <property type="evidence" value="ECO:0007669"/>
    <property type="project" value="UniProtKB-UniRule"/>
</dbReference>
<dbReference type="CDD" id="cd07079">
    <property type="entry name" value="ALDH_F18-19_ProA-GPR"/>
    <property type="match status" value="1"/>
</dbReference>
<dbReference type="FunFam" id="3.40.309.10:FF:000028">
    <property type="entry name" value="Gamma-glutamyl phosphate reductase"/>
    <property type="match status" value="1"/>
</dbReference>
<dbReference type="Gene3D" id="3.40.605.10">
    <property type="entry name" value="Aldehyde Dehydrogenase, Chain A, domain 1"/>
    <property type="match status" value="1"/>
</dbReference>
<dbReference type="Gene3D" id="3.40.309.10">
    <property type="entry name" value="Aldehyde Dehydrogenase, Chain A, domain 2"/>
    <property type="match status" value="1"/>
</dbReference>
<dbReference type="HAMAP" id="MF_00412">
    <property type="entry name" value="ProA"/>
    <property type="match status" value="1"/>
</dbReference>
<dbReference type="InterPro" id="IPR016161">
    <property type="entry name" value="Ald_DH/histidinol_DH"/>
</dbReference>
<dbReference type="InterPro" id="IPR016163">
    <property type="entry name" value="Ald_DH_C"/>
</dbReference>
<dbReference type="InterPro" id="IPR016162">
    <property type="entry name" value="Ald_DH_N"/>
</dbReference>
<dbReference type="InterPro" id="IPR015590">
    <property type="entry name" value="Aldehyde_DH_dom"/>
</dbReference>
<dbReference type="InterPro" id="IPR020593">
    <property type="entry name" value="G-glutamylP_reductase_CS"/>
</dbReference>
<dbReference type="InterPro" id="IPR012134">
    <property type="entry name" value="Glu-5-SA_DH"/>
</dbReference>
<dbReference type="InterPro" id="IPR000965">
    <property type="entry name" value="GPR_dom"/>
</dbReference>
<dbReference type="NCBIfam" id="NF001221">
    <property type="entry name" value="PRK00197.1"/>
    <property type="match status" value="1"/>
</dbReference>
<dbReference type="NCBIfam" id="TIGR00407">
    <property type="entry name" value="proA"/>
    <property type="match status" value="1"/>
</dbReference>
<dbReference type="PANTHER" id="PTHR11063:SF8">
    <property type="entry name" value="DELTA-1-PYRROLINE-5-CARBOXYLATE SYNTHASE"/>
    <property type="match status" value="1"/>
</dbReference>
<dbReference type="PANTHER" id="PTHR11063">
    <property type="entry name" value="GLUTAMATE SEMIALDEHYDE DEHYDROGENASE"/>
    <property type="match status" value="1"/>
</dbReference>
<dbReference type="Pfam" id="PF00171">
    <property type="entry name" value="Aldedh"/>
    <property type="match status" value="1"/>
</dbReference>
<dbReference type="PIRSF" id="PIRSF000151">
    <property type="entry name" value="GPR"/>
    <property type="match status" value="1"/>
</dbReference>
<dbReference type="SUPFAM" id="SSF53720">
    <property type="entry name" value="ALDH-like"/>
    <property type="match status" value="1"/>
</dbReference>
<dbReference type="PROSITE" id="PS01223">
    <property type="entry name" value="PROA"/>
    <property type="match status" value="1"/>
</dbReference>
<protein>
    <recommendedName>
        <fullName evidence="1">Gamma-glutamyl phosphate reductase</fullName>
        <shortName evidence="1">GPR</shortName>
        <ecNumber evidence="1">1.2.1.41</ecNumber>
    </recommendedName>
    <alternativeName>
        <fullName evidence="1">Glutamate-5-semialdehyde dehydrogenase</fullName>
    </alternativeName>
    <alternativeName>
        <fullName evidence="1">Glutamyl-gamma-semialdehyde dehydrogenase</fullName>
        <shortName evidence="1">GSA dehydrogenase</shortName>
    </alternativeName>
</protein>
<accession>Q04Q92</accession>
<evidence type="ECO:0000255" key="1">
    <source>
        <dbReference type="HAMAP-Rule" id="MF_00412"/>
    </source>
</evidence>